<reference key="1">
    <citation type="journal article" date="2002" name="Lancet">
        <title>Genome and virulence determinants of high virulence community-acquired MRSA.</title>
        <authorList>
            <person name="Baba T."/>
            <person name="Takeuchi F."/>
            <person name="Kuroda M."/>
            <person name="Yuzawa H."/>
            <person name="Aoki K."/>
            <person name="Oguchi A."/>
            <person name="Nagai Y."/>
            <person name="Iwama N."/>
            <person name="Asano K."/>
            <person name="Naimi T."/>
            <person name="Kuroda H."/>
            <person name="Cui L."/>
            <person name="Yamamoto K."/>
            <person name="Hiramatsu K."/>
        </authorList>
    </citation>
    <scope>NUCLEOTIDE SEQUENCE [LARGE SCALE GENOMIC DNA]</scope>
    <source>
        <strain>MW2</strain>
    </source>
</reference>
<dbReference type="EMBL" id="BA000033">
    <property type="protein sequence ID" value="BAB96040.1"/>
    <property type="molecule type" value="Genomic_DNA"/>
</dbReference>
<dbReference type="RefSeq" id="WP_001159898.1">
    <property type="nucleotide sequence ID" value="NC_003923.1"/>
</dbReference>
<dbReference type="KEGG" id="sam:MW2175"/>
<dbReference type="HOGENOM" id="CLU_076024_0_0_9"/>
<dbReference type="GO" id="GO:0005886">
    <property type="term" value="C:plasma membrane"/>
    <property type="evidence" value="ECO:0007669"/>
    <property type="project" value="UniProtKB-SubCell"/>
</dbReference>
<dbReference type="GO" id="GO:0015144">
    <property type="term" value="F:carbohydrate transmembrane transporter activity"/>
    <property type="evidence" value="ECO:0007669"/>
    <property type="project" value="InterPro"/>
</dbReference>
<dbReference type="InterPro" id="IPR010651">
    <property type="entry name" value="Sugar_transport"/>
</dbReference>
<dbReference type="PANTHER" id="PTHR16119">
    <property type="entry name" value="TRANSMEMBRANE PROTEIN 144"/>
    <property type="match status" value="1"/>
</dbReference>
<dbReference type="PANTHER" id="PTHR16119:SF17">
    <property type="entry name" value="TRANSMEMBRANE PROTEIN 144"/>
    <property type="match status" value="1"/>
</dbReference>
<dbReference type="Pfam" id="PF06800">
    <property type="entry name" value="Sugar_transport"/>
    <property type="match status" value="1"/>
</dbReference>
<dbReference type="SUPFAM" id="SSF103481">
    <property type="entry name" value="Multidrug resistance efflux transporter EmrE"/>
    <property type="match status" value="2"/>
</dbReference>
<feature type="chain" id="PRO_0000213629" description="Probable glucose uptake protein GlcU">
    <location>
        <begin position="1"/>
        <end position="287"/>
    </location>
</feature>
<feature type="transmembrane region" description="Helical" evidence="2">
    <location>
        <begin position="7"/>
        <end position="29"/>
    </location>
</feature>
<feature type="transmembrane region" description="Helical" evidence="2">
    <location>
        <begin position="34"/>
        <end position="53"/>
    </location>
</feature>
<feature type="transmembrane region" description="Helical" evidence="2">
    <location>
        <begin position="60"/>
        <end position="77"/>
    </location>
</feature>
<feature type="transmembrane region" description="Helical" evidence="2">
    <location>
        <begin position="114"/>
        <end position="136"/>
    </location>
</feature>
<feature type="transmembrane region" description="Helical" evidence="2">
    <location>
        <begin position="157"/>
        <end position="179"/>
    </location>
</feature>
<feature type="transmembrane region" description="Helical" evidence="2">
    <location>
        <begin position="184"/>
        <end position="201"/>
    </location>
</feature>
<feature type="transmembrane region" description="Helical" evidence="2">
    <location>
        <begin position="208"/>
        <end position="230"/>
    </location>
</feature>
<feature type="transmembrane region" description="Helical" evidence="2">
    <location>
        <begin position="235"/>
        <end position="257"/>
    </location>
</feature>
<feature type="transmembrane region" description="Helical" evidence="2">
    <location>
        <begin position="269"/>
        <end position="286"/>
    </location>
</feature>
<proteinExistence type="inferred from homology"/>
<comment type="function">
    <text evidence="1">Involved in the uptake of glucose.</text>
</comment>
<comment type="subcellular location">
    <subcellularLocation>
        <location evidence="3">Cell membrane</location>
        <topology evidence="3">Multi-pass membrane protein</topology>
    </subcellularLocation>
</comment>
<comment type="similarity">
    <text evidence="3">Belongs to the GRP transporter (TC 2.A.7.5) family.</text>
</comment>
<sequence length="287" mass="30393">MQFLDFLIALLPALFWGSVVLINVFVGGGPYNQIRGTTLGALIVGLGLLITGFAKFNNPTVIIVGLISGALWAFGQANQLKSISLIGVSNTMPVSTGMQLVGTTLFSVIFLGEWSSMTQIIFGLIAMILLVTGVALTSLKAKNERQSDNPEFKKAMGILIVSTVGYVGFVVLGDIFGVGGTDALFFQSVGMAIGGFILSMNHKTSLKSTALNLLPGVIWGIGNLFMFYSQPKVGVATSFSLSQLLVIVSTLGGIFILGERKDRRQMTGIWAGIIIIVIAAIILGNLK</sequence>
<name>GLCU_STAAW</name>
<organism>
    <name type="scientific">Staphylococcus aureus (strain MW2)</name>
    <dbReference type="NCBI Taxonomy" id="196620"/>
    <lineage>
        <taxon>Bacteria</taxon>
        <taxon>Bacillati</taxon>
        <taxon>Bacillota</taxon>
        <taxon>Bacilli</taxon>
        <taxon>Bacillales</taxon>
        <taxon>Staphylococcaceae</taxon>
        <taxon>Staphylococcus</taxon>
    </lineage>
</organism>
<evidence type="ECO:0000250" key="1"/>
<evidence type="ECO:0000255" key="2"/>
<evidence type="ECO:0000305" key="3"/>
<protein>
    <recommendedName>
        <fullName>Probable glucose uptake protein GlcU</fullName>
    </recommendedName>
</protein>
<keyword id="KW-1003">Cell membrane</keyword>
<keyword id="KW-0472">Membrane</keyword>
<keyword id="KW-0762">Sugar transport</keyword>
<keyword id="KW-0812">Transmembrane</keyword>
<keyword id="KW-1133">Transmembrane helix</keyword>
<keyword id="KW-0813">Transport</keyword>
<accession>P60945</accession>
<accession>Q99S15</accession>
<gene>
    <name type="primary">glcU</name>
    <name type="ordered locus">MW2175</name>
</gene>